<name>SCAM4_PONAB</name>
<organism>
    <name type="scientific">Pongo abelii</name>
    <name type="common">Sumatran orangutan</name>
    <name type="synonym">Pongo pygmaeus abelii</name>
    <dbReference type="NCBI Taxonomy" id="9601"/>
    <lineage>
        <taxon>Eukaryota</taxon>
        <taxon>Metazoa</taxon>
        <taxon>Chordata</taxon>
        <taxon>Craniata</taxon>
        <taxon>Vertebrata</taxon>
        <taxon>Euteleostomi</taxon>
        <taxon>Mammalia</taxon>
        <taxon>Eutheria</taxon>
        <taxon>Euarchontoglires</taxon>
        <taxon>Primates</taxon>
        <taxon>Haplorrhini</taxon>
        <taxon>Catarrhini</taxon>
        <taxon>Hominidae</taxon>
        <taxon>Pongo</taxon>
    </lineage>
</organism>
<gene>
    <name type="primary">SCAMP4</name>
</gene>
<protein>
    <recommendedName>
        <fullName>Secretory carrier-associated membrane protein 4</fullName>
        <shortName>Secretory carrier membrane protein 4</shortName>
    </recommendedName>
</protein>
<reference key="1">
    <citation type="submission" date="2004-11" db="EMBL/GenBank/DDBJ databases">
        <authorList>
            <consortium name="The German cDNA consortium"/>
        </authorList>
    </citation>
    <scope>NUCLEOTIDE SEQUENCE [LARGE SCALE MRNA]</scope>
    <source>
        <tissue>Heart</tissue>
    </source>
</reference>
<evidence type="ECO:0000250" key="1"/>
<evidence type="ECO:0000250" key="2">
    <source>
        <dbReference type="UniProtKB" id="Q969E2"/>
    </source>
</evidence>
<evidence type="ECO:0000255" key="3"/>
<evidence type="ECO:0000256" key="4">
    <source>
        <dbReference type="SAM" id="MobiDB-lite"/>
    </source>
</evidence>
<evidence type="ECO:0000305" key="5"/>
<dbReference type="EMBL" id="CR858129">
    <property type="protein sequence ID" value="CAH90368.1"/>
    <property type="molecule type" value="mRNA"/>
</dbReference>
<dbReference type="RefSeq" id="NP_001125177.1">
    <property type="nucleotide sequence ID" value="NM_001131705.2"/>
</dbReference>
<dbReference type="FunCoup" id="Q5RCY9">
    <property type="interactions" value="475"/>
</dbReference>
<dbReference type="Ensembl" id="ENSPPYT00000010886.3">
    <property type="protein sequence ID" value="ENSPPYP00000010473.2"/>
    <property type="gene ID" value="ENSPPYG00000009332.3"/>
</dbReference>
<dbReference type="GeneID" id="100172066"/>
<dbReference type="KEGG" id="pon:100172066"/>
<dbReference type="CTD" id="113178"/>
<dbReference type="eggNOG" id="KOG3088">
    <property type="taxonomic scope" value="Eukaryota"/>
</dbReference>
<dbReference type="GeneTree" id="ENSGT00940000162150"/>
<dbReference type="HOGENOM" id="CLU_066546_1_0_1"/>
<dbReference type="InParanoid" id="Q5RCY9"/>
<dbReference type="TreeFam" id="TF313797"/>
<dbReference type="Proteomes" id="UP000001595">
    <property type="component" value="Chromosome 19"/>
</dbReference>
<dbReference type="GO" id="GO:0055038">
    <property type="term" value="C:recycling endosome membrane"/>
    <property type="evidence" value="ECO:0007669"/>
    <property type="project" value="TreeGrafter"/>
</dbReference>
<dbReference type="GO" id="GO:0032588">
    <property type="term" value="C:trans-Golgi network membrane"/>
    <property type="evidence" value="ECO:0007669"/>
    <property type="project" value="TreeGrafter"/>
</dbReference>
<dbReference type="GO" id="GO:0015031">
    <property type="term" value="P:protein transport"/>
    <property type="evidence" value="ECO:0007669"/>
    <property type="project" value="UniProtKB-KW"/>
</dbReference>
<dbReference type="InterPro" id="IPR007273">
    <property type="entry name" value="SCAMP"/>
</dbReference>
<dbReference type="PANTHER" id="PTHR10687:SF11">
    <property type="entry name" value="SECRETORY CARRIER-ASSOCIATED MEMBRANE PROTEIN 4"/>
    <property type="match status" value="1"/>
</dbReference>
<dbReference type="PANTHER" id="PTHR10687">
    <property type="entry name" value="SECRETORY CARRIER-ASSOCIATED MEMBRANE PROTEIN SCAMP"/>
    <property type="match status" value="1"/>
</dbReference>
<dbReference type="Pfam" id="PF04144">
    <property type="entry name" value="SCAMP"/>
    <property type="match status" value="1"/>
</dbReference>
<comment type="function">
    <text evidence="1">Probably involved in membrane protein trafficking.</text>
</comment>
<comment type="subcellular location">
    <subcellularLocation>
        <location evidence="1">Membrane</location>
        <topology evidence="1">Multi-pass membrane protein</topology>
    </subcellularLocation>
</comment>
<comment type="similarity">
    <text evidence="5">Belongs to the SCAMP family.</text>
</comment>
<proteinExistence type="evidence at transcript level"/>
<accession>Q5RCY9</accession>
<sequence length="229" mass="25758">MSEKENNFPPLPKFIPVKPCFYQNFSDEIPVEHQVLVKRIYRLWMFYCATLGVNLIACLAWWIGGGSGTNFGLAFVWLLLFTPCSYVCWFRPVYKAFRADSSFNFMAFFFIFGAQFVLTVIQAIGFSGWGACGWLSAIGFFQYSPGAAVVMLLPAIMFSVSAAMMAIAIMKVHRIYRGAGGSFQKAQTEWNTGTWRNPPSREAQYNNFSGNSLPEYPTVPSYPGSGQWP</sequence>
<keyword id="KW-0472">Membrane</keyword>
<keyword id="KW-0597">Phosphoprotein</keyword>
<keyword id="KW-0653">Protein transport</keyword>
<keyword id="KW-1185">Reference proteome</keyword>
<keyword id="KW-0812">Transmembrane</keyword>
<keyword id="KW-1133">Transmembrane helix</keyword>
<keyword id="KW-0813">Transport</keyword>
<feature type="chain" id="PRO_0000351647" description="Secretory carrier-associated membrane protein 4">
    <location>
        <begin position="1"/>
        <end position="229"/>
    </location>
</feature>
<feature type="topological domain" description="Cytoplasmic" evidence="3">
    <location>
        <begin position="1"/>
        <end position="39"/>
    </location>
</feature>
<feature type="transmembrane region" description="Helical" evidence="3">
    <location>
        <begin position="40"/>
        <end position="60"/>
    </location>
</feature>
<feature type="transmembrane region" description="Helical" evidence="3">
    <location>
        <begin position="61"/>
        <end position="81"/>
    </location>
</feature>
<feature type="transmembrane region" description="Helical" evidence="3">
    <location>
        <begin position="105"/>
        <end position="125"/>
    </location>
</feature>
<feature type="transmembrane region" description="Helical" evidence="3">
    <location>
        <begin position="149"/>
        <end position="169"/>
    </location>
</feature>
<feature type="topological domain" description="Cytoplasmic" evidence="3">
    <location>
        <begin position="170"/>
        <end position="229"/>
    </location>
</feature>
<feature type="region of interest" description="Disordered" evidence="4">
    <location>
        <begin position="208"/>
        <end position="229"/>
    </location>
</feature>
<feature type="modified residue" description="Phosphothreonine" evidence="2">
    <location>
        <position position="194"/>
    </location>
</feature>